<sequence length="497" mass="54920">MEPAELEHALCGSLFSTQTPSWSSFGGPEHQEMSFLEQGDSTSWPSPAMTTSAEISLGEQRTKVSRWKSQEDVEERELPGLEGGPQSRAAAESTGLEATFPKATPLAQATPLSAVGTPTTERDSLPADCTASASSSSTDDLDQGIEFSAPAAWGDELGLVEERPAQCPSPQVPVLRLGWDDELRKPGAQVYMHFMQEHTCYDAMATSSKLVIFDTMLQIKKAFFALVANGVRAAPLWDSKKQSFVGMLTITDFILVLHRYYRSPLVQIYEIEEHKIETWREIYLQGCFKPLVSISPSDSLFEAVYTLIKNRIHRLPVLDPVSGAVLHILTHKRLLKFLHIFQRTLLPRPSFLYRTIQDLGIGTFRDLAVVLETAPILTALDIFVDRRVSALPVINEAGQVVGLYSRFDVIHLAAQQTYNHLDISVGEALRRRTLCLEGVLSCQPHETLGEVIDRIAREQVHRLVLVDETQHLLGVVSLSDILQALVLSPAGIDALGA</sequence>
<comment type="function">
    <text evidence="3">AMP/ATP-binding subunit of AMP-activated protein kinase (AMPK), an energy sensor protein kinase that plays a key role in regulating cellular energy metabolism. In response to reduction of intracellular ATP levels, AMPK activates energy-producing pathways and inhibits energy-consuming processes: inhibits protein, carbohydrate and lipid biosynthesis, as well as cell growth and proliferation. AMPK acts via direct phosphorylation of metabolic enzymes, and by longer-term effects via phosphorylation of transcription regulators. AMPK also acts as a regulator of cellular polarity by remodeling the actin cytoskeleton; probably by indirectly activating myosin. The AMPK gamma3 subunit is a non-catalytic subunit with a regulatory role in muscle energy metabolism. It mediates binding to AMP, ADP and ATP, leading to AMPK activation or inhibition: AMP-binding results in allosteric activation of alpha catalytic subunit (PRKAA1 or PRKAA2) both by inducing phosphorylation and preventing dephosphorylation of catalytic subunits. ADP also stimulates phosphorylation, without stimulating already phosphorylated catalytic subunit. ATP promotes dephosphorylation of catalytic subunit, rendering the AMPK enzyme inactive.</text>
</comment>
<comment type="subunit">
    <text evidence="1">AMPK is a heterotrimer of an alpha catalytic subunit (PRKAA1 or PRKAA2), a beta (PRKAB1 or PRKAB2) and a gamma non-catalytic subunits (PRKAG1, PRKAG2 or PRKAG3). Interacts with FNIP1 and FNIP2 (By similarity).</text>
</comment>
<comment type="alternative products">
    <event type="alternative splicing"/>
    <isoform>
        <id>Q2LL38-1</id>
        <name>1</name>
        <sequence type="displayed"/>
    </isoform>
    <isoform>
        <id>Q2LL38-2</id>
        <name>2</name>
        <sequence type="described" ref="VSP_019297"/>
    </isoform>
    <isoform>
        <id>Q2LL38-3</id>
        <name>3</name>
        <sequence type="described" ref="VSP_019298"/>
    </isoform>
    <isoform>
        <id>Q2LL38-4</id>
        <name>4</name>
        <sequence type="described" ref="VSP_019297 VSP_019298"/>
    </isoform>
</comment>
<comment type="domain">
    <text evidence="1">The AMPK pseudosubstrate motif resembles the sequence around sites phosphorylated on target proteins of AMPK, except the presence of a non-phosphorylatable residue in place of Ser. In the absence of AMP this pseudosubstrate sequence may bind to the active site groove on the alpha subunit (PRKAA1 or PRKAA2), preventing phosphorylation by the upstream activating kinase STK11/LKB1 (By similarity).</text>
</comment>
<comment type="domain">
    <text evidence="2">The 4 CBS domains mediate binding to nucleotides. Of the 4 potential nucleotide-binding sites, 3 are occupied, designated as sites 1, 3, and 4 based on the CBS modules that provide the acidic residue for coordination with the 2'- and 3'-hydroxyl groups of the ribose of AMP. Of these, site 4 appears to be a structural site that retains a tightly held AMP molecule (AMP 3). The 2 remaining sites, 1 and 3, can bind either AMP, ADP or ATP. Site 1 (AMP, ADP or ATP 1) is the high-affinity binding site and likely accommodates AMP or ADP. Site 3 (AMP, ADP or ATP 2) is the weakest nucleotide-binding site on the gamma subunit, yet it is exquisitely sensitive to changes in nucleotide levels and this allows AMPK to respond rapidly to changes in cellular energy status. Site 3 is likely to be responsible for protection of a conserved threonine in the activation loop of the alpha catalytic subunit through conformational changes induced by binding of AMP or ADP.</text>
</comment>
<comment type="PTM">
    <text evidence="3">Phosphorylated by ULK1; leading to negatively regulate AMPK activity and suggesting the existence of a regulatory feedback loop between ULK1 and AMPK.</text>
</comment>
<comment type="PTM">
    <text evidence="3">Glycosylated; O-GlcNAcylated by OGT, promoting the AMP-activated protein kinase (AMPK) activity.</text>
</comment>
<comment type="similarity">
    <text evidence="8">Belongs to the 5'-AMP-activated protein kinase gamma subunit family.</text>
</comment>
<accession>Q2LL38</accession>
<accession>Q2LL34</accession>
<accession>Q2LL35</accession>
<accession>Q2LL36</accession>
<accession>Q2LL37</accession>
<accession>Q2LL39</accession>
<accession>Q2LL40</accession>
<accession>Q2LL41</accession>
<reference key="1">
    <citation type="journal article" date="2006" name="Mamm. Genome">
        <title>Characterization of the bovine PRKAG3 gene: structure, polymorphism, and alternative transcripts.</title>
        <authorList>
            <person name="Roux M."/>
            <person name="Nizou A."/>
            <person name="Forestier L."/>
            <person name="Ouali A."/>
            <person name="Leveziel H."/>
            <person name="Amarger V."/>
        </authorList>
    </citation>
    <scope>NUCLEOTIDE SEQUENCE [GENOMIC DNA / MRNA] (ISOFORMS 1; 2; 3 AND 4)</scope>
    <scope>VARIANTS SER-127; SER-153; TRP-262; TYR-358 AND MET-373</scope>
</reference>
<gene>
    <name type="primary">PRKAG3</name>
</gene>
<dbReference type="EMBL" id="DQ082732">
    <property type="protein sequence ID" value="AAZ31228.1"/>
    <property type="molecule type" value="mRNA"/>
</dbReference>
<dbReference type="EMBL" id="DQ082733">
    <property type="protein sequence ID" value="AAZ31229.1"/>
    <property type="molecule type" value="mRNA"/>
</dbReference>
<dbReference type="EMBL" id="DQ082734">
    <property type="protein sequence ID" value="AAZ31230.1"/>
    <property type="molecule type" value="mRNA"/>
</dbReference>
<dbReference type="EMBL" id="DQ082735">
    <property type="protein sequence ID" value="AAZ31231.1"/>
    <property type="molecule type" value="mRNA"/>
</dbReference>
<dbReference type="EMBL" id="DQ082736">
    <property type="protein sequence ID" value="AAZ31232.1"/>
    <property type="molecule type" value="Genomic_DNA"/>
</dbReference>
<dbReference type="EMBL" id="DQ082736">
    <property type="protein sequence ID" value="AAZ31233.1"/>
    <property type="molecule type" value="Genomic_DNA"/>
</dbReference>
<dbReference type="EMBL" id="DQ082736">
    <property type="protein sequence ID" value="AAZ31234.1"/>
    <property type="molecule type" value="Genomic_DNA"/>
</dbReference>
<dbReference type="EMBL" id="DQ082736">
    <property type="protein sequence ID" value="AAZ31235.1"/>
    <property type="molecule type" value="Genomic_DNA"/>
</dbReference>
<dbReference type="RefSeq" id="NP_001025473.2">
    <molecule id="Q2LL38-1"/>
    <property type="nucleotide sequence ID" value="NM_001030302.2"/>
</dbReference>
<dbReference type="RefSeq" id="NP_001155891.1">
    <molecule id="Q2LL38-3"/>
    <property type="nucleotide sequence ID" value="NM_001162419.1"/>
</dbReference>
<dbReference type="RefSeq" id="NP_001155892.1">
    <molecule id="Q2LL38-2"/>
    <property type="nucleotide sequence ID" value="NM_001162420.1"/>
</dbReference>
<dbReference type="RefSeq" id="NP_001155893.1">
    <molecule id="Q2LL38-4"/>
    <property type="nucleotide sequence ID" value="NM_001162421.1"/>
</dbReference>
<dbReference type="SMR" id="Q2LL38"/>
<dbReference type="CORUM" id="Q2LL38"/>
<dbReference type="FunCoup" id="Q2LL38">
    <property type="interactions" value="1131"/>
</dbReference>
<dbReference type="STRING" id="9913.ENSBTAP00000017940"/>
<dbReference type="PaxDb" id="9913-ENSBTAP00000017940"/>
<dbReference type="Ensembl" id="ENSBTAT00000017940.6">
    <molecule id="Q2LL38-1"/>
    <property type="protein sequence ID" value="ENSBTAP00000017940.5"/>
    <property type="gene ID" value="ENSBTAG00000013492.7"/>
</dbReference>
<dbReference type="GeneID" id="511961"/>
<dbReference type="KEGG" id="bta:511961"/>
<dbReference type="CTD" id="53632"/>
<dbReference type="VEuPathDB" id="HostDB:ENSBTAG00000013492"/>
<dbReference type="eggNOG" id="KOG1764">
    <property type="taxonomic scope" value="Eukaryota"/>
</dbReference>
<dbReference type="GeneTree" id="ENSGT00950000183019"/>
<dbReference type="HOGENOM" id="CLU_021740_6_0_1"/>
<dbReference type="InParanoid" id="Q2LL38"/>
<dbReference type="OMA" id="DFIMVLM"/>
<dbReference type="OrthoDB" id="449052at2759"/>
<dbReference type="TreeFam" id="TF313247"/>
<dbReference type="Reactome" id="R-BTA-1632852">
    <property type="pathway name" value="Macroautophagy"/>
</dbReference>
<dbReference type="Reactome" id="R-BTA-380972">
    <property type="pathway name" value="Energy dependent regulation of mTOR by LKB1-AMPK"/>
</dbReference>
<dbReference type="Reactome" id="R-BTA-5628897">
    <property type="pathway name" value="TP53 Regulates Metabolic Genes"/>
</dbReference>
<dbReference type="Reactome" id="R-BTA-6804756">
    <property type="pathway name" value="Regulation of TP53 Activity through Phosphorylation"/>
</dbReference>
<dbReference type="Proteomes" id="UP000009136">
    <property type="component" value="Chromosome 2"/>
</dbReference>
<dbReference type="Bgee" id="ENSBTAG00000013492">
    <property type="expression patterns" value="Expressed in choroid plexus and 95 other cell types or tissues"/>
</dbReference>
<dbReference type="GO" id="GO:0005737">
    <property type="term" value="C:cytoplasm"/>
    <property type="evidence" value="ECO:0000318"/>
    <property type="project" value="GO_Central"/>
</dbReference>
<dbReference type="GO" id="GO:0005829">
    <property type="term" value="C:cytosol"/>
    <property type="evidence" value="ECO:0007669"/>
    <property type="project" value="UniProtKB-ARBA"/>
</dbReference>
<dbReference type="GO" id="GO:0031588">
    <property type="term" value="C:nucleotide-activated protein kinase complex"/>
    <property type="evidence" value="ECO:0000318"/>
    <property type="project" value="GO_Central"/>
</dbReference>
<dbReference type="GO" id="GO:0005634">
    <property type="term" value="C:nucleus"/>
    <property type="evidence" value="ECO:0000318"/>
    <property type="project" value="GO_Central"/>
</dbReference>
<dbReference type="GO" id="GO:0016208">
    <property type="term" value="F:AMP binding"/>
    <property type="evidence" value="ECO:0000318"/>
    <property type="project" value="GO_Central"/>
</dbReference>
<dbReference type="GO" id="GO:0005524">
    <property type="term" value="F:ATP binding"/>
    <property type="evidence" value="ECO:0007669"/>
    <property type="project" value="UniProtKB-KW"/>
</dbReference>
<dbReference type="GO" id="GO:0019901">
    <property type="term" value="F:protein kinase binding"/>
    <property type="evidence" value="ECO:0000318"/>
    <property type="project" value="GO_Central"/>
</dbReference>
<dbReference type="GO" id="GO:0019887">
    <property type="term" value="F:protein kinase regulator activity"/>
    <property type="evidence" value="ECO:0000250"/>
    <property type="project" value="UniProtKB"/>
</dbReference>
<dbReference type="GO" id="GO:0042149">
    <property type="term" value="P:cellular response to glucose starvation"/>
    <property type="evidence" value="ECO:0000318"/>
    <property type="project" value="GO_Central"/>
</dbReference>
<dbReference type="GO" id="GO:0006633">
    <property type="term" value="P:fatty acid biosynthetic process"/>
    <property type="evidence" value="ECO:0007669"/>
    <property type="project" value="UniProtKB-KW"/>
</dbReference>
<dbReference type="GO" id="GO:0045722">
    <property type="term" value="P:positive regulation of gluconeogenesis"/>
    <property type="evidence" value="ECO:0000318"/>
    <property type="project" value="GO_Central"/>
</dbReference>
<dbReference type="GO" id="GO:0043609">
    <property type="term" value="P:regulation of carbon utilization"/>
    <property type="evidence" value="ECO:0000318"/>
    <property type="project" value="GO_Central"/>
</dbReference>
<dbReference type="GO" id="GO:0006110">
    <property type="term" value="P:regulation of glycolytic process"/>
    <property type="evidence" value="ECO:0000318"/>
    <property type="project" value="GO_Central"/>
</dbReference>
<dbReference type="CDD" id="cd04618">
    <property type="entry name" value="CBS_euAMPK_gamma-like_repeat1"/>
    <property type="match status" value="1"/>
</dbReference>
<dbReference type="CDD" id="cd04641">
    <property type="entry name" value="CBS_euAMPK_gamma-like_repeat2"/>
    <property type="match status" value="1"/>
</dbReference>
<dbReference type="FunFam" id="3.10.580.10:FF:000003">
    <property type="entry name" value="Protein kinase AMP-activated non-catalytic subunit gamma 1"/>
    <property type="match status" value="1"/>
</dbReference>
<dbReference type="FunFam" id="3.10.580.10:FF:000004">
    <property type="entry name" value="Protein kinase AMP-activated non-catalytic subunit gamma 2"/>
    <property type="match status" value="1"/>
</dbReference>
<dbReference type="Gene3D" id="3.10.580.10">
    <property type="entry name" value="CBS-domain"/>
    <property type="match status" value="2"/>
</dbReference>
<dbReference type="InterPro" id="IPR050511">
    <property type="entry name" value="AMPK_gamma/SDS23_families"/>
</dbReference>
<dbReference type="InterPro" id="IPR000644">
    <property type="entry name" value="CBS_dom"/>
</dbReference>
<dbReference type="InterPro" id="IPR046342">
    <property type="entry name" value="CBS_dom_sf"/>
</dbReference>
<dbReference type="PANTHER" id="PTHR13780:SF31">
    <property type="entry name" value="5'-AMP-ACTIVATED PROTEIN KINASE SUBUNIT GAMMA-3"/>
    <property type="match status" value="1"/>
</dbReference>
<dbReference type="PANTHER" id="PTHR13780">
    <property type="entry name" value="AMP-ACTIVATED PROTEIN KINASE, GAMMA REGULATORY SUBUNIT"/>
    <property type="match status" value="1"/>
</dbReference>
<dbReference type="Pfam" id="PF00571">
    <property type="entry name" value="CBS"/>
    <property type="match status" value="3"/>
</dbReference>
<dbReference type="SMART" id="SM00116">
    <property type="entry name" value="CBS"/>
    <property type="match status" value="4"/>
</dbReference>
<dbReference type="SUPFAM" id="SSF54631">
    <property type="entry name" value="CBS-domain pair"/>
    <property type="match status" value="2"/>
</dbReference>
<dbReference type="PROSITE" id="PS51371">
    <property type="entry name" value="CBS"/>
    <property type="match status" value="4"/>
</dbReference>
<keyword id="KW-0025">Alternative splicing</keyword>
<keyword id="KW-0067">ATP-binding</keyword>
<keyword id="KW-0129">CBS domain</keyword>
<keyword id="KW-0275">Fatty acid biosynthesis</keyword>
<keyword id="KW-0276">Fatty acid metabolism</keyword>
<keyword id="KW-0325">Glycoprotein</keyword>
<keyword id="KW-0444">Lipid biosynthesis</keyword>
<keyword id="KW-0443">Lipid metabolism</keyword>
<keyword id="KW-0547">Nucleotide-binding</keyword>
<keyword id="KW-0597">Phosphoprotein</keyword>
<keyword id="KW-1185">Reference proteome</keyword>
<keyword id="KW-0677">Repeat</keyword>
<evidence type="ECO:0000250" key="1"/>
<evidence type="ECO:0000250" key="2">
    <source>
        <dbReference type="UniProtKB" id="P80385"/>
    </source>
</evidence>
<evidence type="ECO:0000250" key="3">
    <source>
        <dbReference type="UniProtKB" id="Q9UGI9"/>
    </source>
</evidence>
<evidence type="ECO:0000255" key="4">
    <source>
        <dbReference type="PROSITE-ProRule" id="PRU00703"/>
    </source>
</evidence>
<evidence type="ECO:0000256" key="5">
    <source>
        <dbReference type="SAM" id="MobiDB-lite"/>
    </source>
</evidence>
<evidence type="ECO:0000269" key="6">
    <source>
    </source>
</evidence>
<evidence type="ECO:0000303" key="7">
    <source>
    </source>
</evidence>
<evidence type="ECO:0000305" key="8"/>
<feature type="chain" id="PRO_0000240150" description="5'-AMP-activated protein kinase subunit gamma-3">
    <location>
        <begin position="1"/>
        <end position="497"/>
    </location>
</feature>
<feature type="domain" description="CBS 1" evidence="4">
    <location>
        <begin position="204"/>
        <end position="265"/>
    </location>
</feature>
<feature type="domain" description="CBS 2" evidence="4">
    <location>
        <begin position="287"/>
        <end position="345"/>
    </location>
</feature>
<feature type="domain" description="CBS 3" evidence="4">
    <location>
        <begin position="363"/>
        <end position="423"/>
    </location>
</feature>
<feature type="domain" description="CBS 4" evidence="4">
    <location>
        <begin position="435"/>
        <end position="494"/>
    </location>
</feature>
<feature type="region of interest" description="Disordered" evidence="5">
    <location>
        <begin position="16"/>
        <end position="143"/>
    </location>
</feature>
<feature type="short sequence motif" description="AMPK pseudosubstrate">
    <location>
        <begin position="300"/>
        <end position="321"/>
    </location>
</feature>
<feature type="compositionally biased region" description="Polar residues" evidence="5">
    <location>
        <begin position="39"/>
        <end position="54"/>
    </location>
</feature>
<feature type="compositionally biased region" description="Basic and acidic residues" evidence="5">
    <location>
        <begin position="68"/>
        <end position="79"/>
    </location>
</feature>
<feature type="binding site" evidence="2">
    <location>
        <position position="232"/>
    </location>
    <ligand>
        <name>ADP</name>
        <dbReference type="ChEBI" id="CHEBI:456216"/>
        <label>2</label>
    </ligand>
</feature>
<feature type="binding site" evidence="2">
    <location>
        <position position="232"/>
    </location>
    <ligand>
        <name>AMP</name>
        <dbReference type="ChEBI" id="CHEBI:456215"/>
        <label>2</label>
    </ligand>
</feature>
<feature type="binding site" evidence="2">
    <location>
        <position position="232"/>
    </location>
    <ligand>
        <name>ATP</name>
        <dbReference type="ChEBI" id="CHEBI:30616"/>
        <label>1</label>
    </ligand>
</feature>
<feature type="binding site" evidence="2">
    <location>
        <position position="232"/>
    </location>
    <ligand>
        <name>ATP</name>
        <dbReference type="ChEBI" id="CHEBI:30616"/>
        <label>2</label>
    </ligand>
</feature>
<feature type="binding site" evidence="2">
    <location>
        <begin position="247"/>
        <end position="252"/>
    </location>
    <ligand>
        <name>ADP</name>
        <dbReference type="ChEBI" id="CHEBI:456216"/>
        <label>1</label>
    </ligand>
</feature>
<feature type="binding site" evidence="2">
    <location>
        <begin position="247"/>
        <end position="252"/>
    </location>
    <ligand>
        <name>AMP</name>
        <dbReference type="ChEBI" id="CHEBI:456215"/>
        <label>1</label>
    </ligand>
</feature>
<feature type="binding site" evidence="2">
    <location>
        <begin position="247"/>
        <end position="252"/>
    </location>
    <ligand>
        <name>ATP</name>
        <dbReference type="ChEBI" id="CHEBI:30616"/>
        <label>1</label>
    </ligand>
</feature>
<feature type="binding site" evidence="2">
    <location>
        <position position="292"/>
    </location>
    <ligand>
        <name>ADP</name>
        <dbReference type="ChEBI" id="CHEBI:456216"/>
        <label>1</label>
    </ligand>
</feature>
<feature type="binding site" evidence="2">
    <location>
        <position position="292"/>
    </location>
    <ligand>
        <name>AMP</name>
        <dbReference type="ChEBI" id="CHEBI:456215"/>
        <label>1</label>
    </ligand>
</feature>
<feature type="binding site" evidence="2">
    <location>
        <position position="292"/>
    </location>
    <ligand>
        <name>ATP</name>
        <dbReference type="ChEBI" id="CHEBI:30616"/>
        <label>1</label>
    </ligand>
</feature>
<feature type="binding site" evidence="2">
    <location>
        <begin position="313"/>
        <end position="314"/>
    </location>
    <ligand>
        <name>ADP</name>
        <dbReference type="ChEBI" id="CHEBI:456216"/>
        <label>1</label>
    </ligand>
</feature>
<feature type="binding site" evidence="2">
    <location>
        <begin position="313"/>
        <end position="314"/>
    </location>
    <ligand>
        <name>AMP</name>
        <dbReference type="ChEBI" id="CHEBI:456215"/>
        <label>1</label>
    </ligand>
</feature>
<feature type="binding site" evidence="2">
    <location>
        <begin position="313"/>
        <end position="314"/>
    </location>
    <ligand>
        <name>ATP</name>
        <dbReference type="ChEBI" id="CHEBI:30616"/>
        <label>1</label>
    </ligand>
</feature>
<feature type="binding site" evidence="2">
    <location>
        <position position="313"/>
    </location>
    <ligand>
        <name>AMP</name>
        <dbReference type="ChEBI" id="CHEBI:456215"/>
        <label>3</label>
    </ligand>
</feature>
<feature type="binding site" evidence="2">
    <location>
        <position position="314"/>
    </location>
    <ligand>
        <name>ATP</name>
        <dbReference type="ChEBI" id="CHEBI:30616"/>
        <label>2</label>
    </ligand>
</feature>
<feature type="binding site" evidence="2">
    <location>
        <position position="332"/>
    </location>
    <ligand>
        <name>ADP</name>
        <dbReference type="ChEBI" id="CHEBI:456216"/>
        <label>2</label>
    </ligand>
</feature>
<feature type="binding site" evidence="2">
    <location>
        <position position="332"/>
    </location>
    <ligand>
        <name>AMP</name>
        <dbReference type="ChEBI" id="CHEBI:456215"/>
        <label>2</label>
    </ligand>
</feature>
<feature type="binding site" evidence="2">
    <location>
        <position position="332"/>
    </location>
    <ligand>
        <name>ATP</name>
        <dbReference type="ChEBI" id="CHEBI:30616"/>
        <label>2</label>
    </ligand>
</feature>
<feature type="binding site" evidence="2">
    <location>
        <position position="363"/>
    </location>
    <ligand>
        <name>AMP</name>
        <dbReference type="ChEBI" id="CHEBI:456215"/>
        <label>3</label>
    </ligand>
</feature>
<feature type="binding site" evidence="2">
    <location>
        <position position="368"/>
    </location>
    <ligand>
        <name>AMP</name>
        <dbReference type="ChEBI" id="CHEBI:456215"/>
        <label>3</label>
    </ligand>
</feature>
<feature type="binding site" evidence="2">
    <location>
        <begin position="389"/>
        <end position="390"/>
    </location>
    <ligand>
        <name>AMP</name>
        <dbReference type="ChEBI" id="CHEBI:456215"/>
        <label>3</label>
    </ligand>
</feature>
<feature type="binding site" evidence="2">
    <location>
        <begin position="405"/>
        <end position="408"/>
    </location>
    <ligand>
        <name>ADP</name>
        <dbReference type="ChEBI" id="CHEBI:456216"/>
        <label>2</label>
    </ligand>
</feature>
<feature type="binding site" evidence="2">
    <location>
        <begin position="405"/>
        <end position="408"/>
    </location>
    <ligand>
        <name>AMP</name>
        <dbReference type="ChEBI" id="CHEBI:456215"/>
        <label>2</label>
    </ligand>
</feature>
<feature type="binding site" evidence="2">
    <location>
        <begin position="405"/>
        <end position="408"/>
    </location>
    <ligand>
        <name>ATP</name>
        <dbReference type="ChEBI" id="CHEBI:30616"/>
        <label>2</label>
    </ligand>
</feature>
<feature type="binding site" evidence="2">
    <location>
        <position position="432"/>
    </location>
    <ligand>
        <name>ADP</name>
        <dbReference type="ChEBI" id="CHEBI:456216"/>
        <label>2</label>
    </ligand>
</feature>
<feature type="binding site" evidence="2">
    <location>
        <position position="432"/>
    </location>
    <ligand>
        <name>AMP</name>
        <dbReference type="ChEBI" id="CHEBI:456215"/>
        <label>2</label>
    </ligand>
</feature>
<feature type="binding site" evidence="2">
    <location>
        <position position="432"/>
    </location>
    <ligand>
        <name>ATP</name>
        <dbReference type="ChEBI" id="CHEBI:30616"/>
        <label>2</label>
    </ligand>
</feature>
<feature type="binding site" evidence="2">
    <location>
        <position position="440"/>
    </location>
    <ligand>
        <name>ADP</name>
        <dbReference type="ChEBI" id="CHEBI:456216"/>
        <label>2</label>
    </ligand>
</feature>
<feature type="binding site" evidence="2">
    <location>
        <position position="440"/>
    </location>
    <ligand>
        <name>AMP</name>
        <dbReference type="ChEBI" id="CHEBI:456215"/>
        <label>2</label>
    </ligand>
</feature>
<feature type="binding site" evidence="2">
    <location>
        <position position="440"/>
    </location>
    <ligand>
        <name>ATP</name>
        <dbReference type="ChEBI" id="CHEBI:30616"/>
        <label>2</label>
    </ligand>
</feature>
<feature type="binding site" evidence="2">
    <location>
        <begin position="461"/>
        <end position="462"/>
    </location>
    <ligand>
        <name>ADP</name>
        <dbReference type="ChEBI" id="CHEBI:456216"/>
        <label>2</label>
    </ligand>
</feature>
<feature type="binding site" evidence="2">
    <location>
        <begin position="461"/>
        <end position="462"/>
    </location>
    <ligand>
        <name>AMP</name>
        <dbReference type="ChEBI" id="CHEBI:456215"/>
        <label>2</label>
    </ligand>
</feature>
<feature type="binding site" evidence="2">
    <location>
        <begin position="461"/>
        <end position="462"/>
    </location>
    <ligand>
        <name>ATP</name>
        <dbReference type="ChEBI" id="CHEBI:30616"/>
        <label>2</label>
    </ligand>
</feature>
<feature type="binding site" evidence="2">
    <location>
        <position position="461"/>
    </location>
    <ligand>
        <name>AMP</name>
        <dbReference type="ChEBI" id="CHEBI:456215"/>
        <label>3</label>
    </ligand>
</feature>
<feature type="binding site" evidence="2">
    <location>
        <begin position="477"/>
        <end position="480"/>
    </location>
    <ligand>
        <name>AMP</name>
        <dbReference type="ChEBI" id="CHEBI:456215"/>
        <label>3</label>
    </ligand>
</feature>
<feature type="splice variant" id="VSP_019297" description="In isoform 2 and isoform 4." evidence="7">
    <location>
        <begin position="13"/>
        <end position="18"/>
    </location>
</feature>
<feature type="splice variant" id="VSP_019298" description="In isoform 3 and isoform 4." evidence="7">
    <location>
        <position position="342"/>
    </location>
</feature>
<feature type="sequence variant" description="In strain: Charolais, Holstein and Limousin." evidence="6">
    <original>A</original>
    <variation>S</variation>
    <location>
        <position position="127"/>
    </location>
</feature>
<feature type="sequence variant" description="In strain: Charolais and Limousin." evidence="6">
    <original>W</original>
    <variation>S</variation>
    <location>
        <position position="153"/>
    </location>
</feature>
<feature type="sequence variant" description="In strain: Charolais, Holstein and Limousin." evidence="6">
    <original>R</original>
    <variation>W</variation>
    <location>
        <position position="262"/>
    </location>
</feature>
<feature type="sequence variant" description="In strain: Charolais." evidence="6">
    <original>D</original>
    <variation>Y</variation>
    <location>
        <position position="358"/>
    </location>
</feature>
<feature type="sequence variant" description="In strain: Limousin." evidence="6">
    <original>T</original>
    <variation>M</variation>
    <location>
        <position position="373"/>
    </location>
</feature>
<feature type="sequence conflict" description="In Ref. 1; AAZ31228/AAZ31229/AAZ31230/AAZ31231." evidence="8" ref="1">
    <original>I</original>
    <variation>F</variation>
    <location>
        <position position="455"/>
    </location>
</feature>
<organism>
    <name type="scientific">Bos taurus</name>
    <name type="common">Bovine</name>
    <dbReference type="NCBI Taxonomy" id="9913"/>
    <lineage>
        <taxon>Eukaryota</taxon>
        <taxon>Metazoa</taxon>
        <taxon>Chordata</taxon>
        <taxon>Craniata</taxon>
        <taxon>Vertebrata</taxon>
        <taxon>Euteleostomi</taxon>
        <taxon>Mammalia</taxon>
        <taxon>Eutheria</taxon>
        <taxon>Laurasiatheria</taxon>
        <taxon>Artiodactyla</taxon>
        <taxon>Ruminantia</taxon>
        <taxon>Pecora</taxon>
        <taxon>Bovidae</taxon>
        <taxon>Bovinae</taxon>
        <taxon>Bos</taxon>
    </lineage>
</organism>
<proteinExistence type="evidence at transcript level"/>
<protein>
    <recommendedName>
        <fullName>5'-AMP-activated protein kinase subunit gamma-3</fullName>
        <shortName>AMPK gamma3</shortName>
        <shortName>AMPK subunit gamma-3</shortName>
    </recommendedName>
</protein>
<name>AAKG3_BOVIN</name>